<name>KATG_ACIBT</name>
<keyword id="KW-0349">Heme</keyword>
<keyword id="KW-0376">Hydrogen peroxide</keyword>
<keyword id="KW-0408">Iron</keyword>
<keyword id="KW-0479">Metal-binding</keyword>
<keyword id="KW-0560">Oxidoreductase</keyword>
<keyword id="KW-0575">Peroxidase</keyword>
<feature type="chain" id="PRO_0000354712" description="Catalase-peroxidase">
    <location>
        <begin position="1"/>
        <end position="718"/>
    </location>
</feature>
<feature type="active site" description="Proton acceptor" evidence="1">
    <location>
        <position position="99"/>
    </location>
</feature>
<feature type="binding site" description="axial binding residue" evidence="1">
    <location>
        <position position="260"/>
    </location>
    <ligand>
        <name>heme b</name>
        <dbReference type="ChEBI" id="CHEBI:60344"/>
    </ligand>
    <ligandPart>
        <name>Fe</name>
        <dbReference type="ChEBI" id="CHEBI:18248"/>
    </ligandPart>
</feature>
<feature type="site" description="Transition state stabilizer" evidence="1">
    <location>
        <position position="95"/>
    </location>
</feature>
<feature type="cross-link" description="Tryptophyl-tyrosyl-methioninium (Trp-Tyr) (with M-245)" evidence="1">
    <location>
        <begin position="98"/>
        <end position="219"/>
    </location>
</feature>
<feature type="cross-link" description="Tryptophyl-tyrosyl-methioninium (Tyr-Met) (with W-98)" evidence="1">
    <location>
        <begin position="219"/>
        <end position="245"/>
    </location>
</feature>
<comment type="function">
    <text evidence="1">Bifunctional enzyme with both catalase and broad-spectrum peroxidase activity.</text>
</comment>
<comment type="catalytic activity">
    <reaction evidence="1">
        <text>H2O2 + AH2 = A + 2 H2O</text>
        <dbReference type="Rhea" id="RHEA:30275"/>
        <dbReference type="ChEBI" id="CHEBI:13193"/>
        <dbReference type="ChEBI" id="CHEBI:15377"/>
        <dbReference type="ChEBI" id="CHEBI:16240"/>
        <dbReference type="ChEBI" id="CHEBI:17499"/>
        <dbReference type="EC" id="1.11.1.21"/>
    </reaction>
</comment>
<comment type="catalytic activity">
    <reaction evidence="1">
        <text>2 H2O2 = O2 + 2 H2O</text>
        <dbReference type="Rhea" id="RHEA:20309"/>
        <dbReference type="ChEBI" id="CHEBI:15377"/>
        <dbReference type="ChEBI" id="CHEBI:15379"/>
        <dbReference type="ChEBI" id="CHEBI:16240"/>
        <dbReference type="EC" id="1.11.1.21"/>
    </reaction>
</comment>
<comment type="cofactor">
    <cofactor evidence="1">
        <name>heme b</name>
        <dbReference type="ChEBI" id="CHEBI:60344"/>
    </cofactor>
    <text evidence="1">Binds 1 heme b (iron(II)-protoporphyrin IX) group per dimer.</text>
</comment>
<comment type="subunit">
    <text evidence="1">Homodimer or homotetramer.</text>
</comment>
<comment type="PTM">
    <text evidence="1">Formation of the three residue Trp-Tyr-Met cross-link is important for the catalase, but not the peroxidase activity of the enzyme.</text>
</comment>
<comment type="similarity">
    <text evidence="1">Belongs to the peroxidase family. Peroxidase/catalase subfamily.</text>
</comment>
<evidence type="ECO:0000255" key="1">
    <source>
        <dbReference type="HAMAP-Rule" id="MF_01961"/>
    </source>
</evidence>
<sequence length="718" mass="78570">MSNESKCPFSGHNSKPQVTVGGGTANLHWWPNQLRVDLLNQHSERSNPLGKDFNYRQEFKKLDYYALKADIKNVLTDSQDWWPADWGNYTGLFIRLAWHAAGTYRMGDGRGGAGRGQQRFAPLNSWPDNASLDKARRLLWPVKQKYGQKISWADLFILAGNIALESSGFRTFGFGAGREDVWEPDNDVNWGDEKEWLAHRNSEALAGSNLAATEMGLIYVNPEGPQASGDPRSAAPFIRATFGNMAMDDEEIVALIAGGHTLGKTHGAAPADHVQADPEGAPIEQMGFGWANSYGTGVGKDAITSGLEVIWSQTPTQWSNYFFENLFKYEWVQERSPAGAIQWVAADAEAIIPDPFDPSIKRKPTMLTTDLTLRFDPEFEKISRRFLNDPQAFANAFARAWFKLTHRDMGPKARYLGPEVPAEDLIWQDPLPAASATPSSASIADAKAKIVALGLSAGELVSLAWASASTFRGGDKRGGANGAHIALSPQREWEVNKKAVETLTQIEELKASTQLSLADLIVLAGNVGVEQAAQAAGFNITVPFAPGRVDALQSQTDVESFQLLLGLADGFRNWKKQGVNTPAEVLLIDKAQQLTLTAPELTALIGGLRVLGTNWDGSQHGVFTQQVGVLSTDFFTNLLDMSNVWAPVDSTSEVFEGKDRKSGTVKFTATRNDLVFGSNSILRALAEVYAQADGKEKFVQDFVAAWTKVMNLDRFDLA</sequence>
<organism>
    <name type="scientific">Acinetobacter baumannii (strain ATCC 17978 / DSM 105126 / CIP 53.77 / LMG 1025 / NCDC KC755 / 5377)</name>
    <dbReference type="NCBI Taxonomy" id="400667"/>
    <lineage>
        <taxon>Bacteria</taxon>
        <taxon>Pseudomonadati</taxon>
        <taxon>Pseudomonadota</taxon>
        <taxon>Gammaproteobacteria</taxon>
        <taxon>Moraxellales</taxon>
        <taxon>Moraxellaceae</taxon>
        <taxon>Acinetobacter</taxon>
        <taxon>Acinetobacter calcoaceticus/baumannii complex</taxon>
    </lineage>
</organism>
<protein>
    <recommendedName>
        <fullName evidence="1">Catalase-peroxidase</fullName>
        <shortName evidence="1">CP</shortName>
        <ecNumber evidence="1">1.11.1.21</ecNumber>
    </recommendedName>
    <alternativeName>
        <fullName evidence="1">Peroxidase/catalase</fullName>
    </alternativeName>
</protein>
<dbReference type="EC" id="1.11.1.21" evidence="1"/>
<dbReference type="EMBL" id="CP000521">
    <property type="protein sequence ID" value="ABO10867.2"/>
    <property type="molecule type" value="Genomic_DNA"/>
</dbReference>
<dbReference type="RefSeq" id="WP_000064282.1">
    <property type="nucleotide sequence ID" value="NZ_CACVBA010000001.1"/>
</dbReference>
<dbReference type="SMR" id="A3M1S3"/>
<dbReference type="KEGG" id="acb:A1S_0412"/>
<dbReference type="HOGENOM" id="CLU_025424_2_0_6"/>
<dbReference type="GO" id="GO:0005829">
    <property type="term" value="C:cytosol"/>
    <property type="evidence" value="ECO:0007669"/>
    <property type="project" value="TreeGrafter"/>
</dbReference>
<dbReference type="GO" id="GO:0004096">
    <property type="term" value="F:catalase activity"/>
    <property type="evidence" value="ECO:0007669"/>
    <property type="project" value="UniProtKB-UniRule"/>
</dbReference>
<dbReference type="GO" id="GO:0020037">
    <property type="term" value="F:heme binding"/>
    <property type="evidence" value="ECO:0007669"/>
    <property type="project" value="InterPro"/>
</dbReference>
<dbReference type="GO" id="GO:0046872">
    <property type="term" value="F:metal ion binding"/>
    <property type="evidence" value="ECO:0007669"/>
    <property type="project" value="UniProtKB-KW"/>
</dbReference>
<dbReference type="GO" id="GO:0070301">
    <property type="term" value="P:cellular response to hydrogen peroxide"/>
    <property type="evidence" value="ECO:0007669"/>
    <property type="project" value="TreeGrafter"/>
</dbReference>
<dbReference type="GO" id="GO:0042744">
    <property type="term" value="P:hydrogen peroxide catabolic process"/>
    <property type="evidence" value="ECO:0007669"/>
    <property type="project" value="UniProtKB-KW"/>
</dbReference>
<dbReference type="FunFam" id="1.10.420.10:FF:000002">
    <property type="entry name" value="Catalase-peroxidase"/>
    <property type="match status" value="1"/>
</dbReference>
<dbReference type="FunFam" id="1.10.420.10:FF:000004">
    <property type="entry name" value="Catalase-peroxidase"/>
    <property type="match status" value="1"/>
</dbReference>
<dbReference type="FunFam" id="1.10.520.10:FF:000002">
    <property type="entry name" value="Catalase-peroxidase"/>
    <property type="match status" value="1"/>
</dbReference>
<dbReference type="Gene3D" id="1.10.520.10">
    <property type="match status" value="2"/>
</dbReference>
<dbReference type="Gene3D" id="1.10.420.10">
    <property type="entry name" value="Peroxidase, domain 2"/>
    <property type="match status" value="2"/>
</dbReference>
<dbReference type="HAMAP" id="MF_01961">
    <property type="entry name" value="Catal_peroxid"/>
    <property type="match status" value="1"/>
</dbReference>
<dbReference type="InterPro" id="IPR000763">
    <property type="entry name" value="Catalase_peroxidase"/>
</dbReference>
<dbReference type="InterPro" id="IPR002016">
    <property type="entry name" value="Haem_peroxidase"/>
</dbReference>
<dbReference type="InterPro" id="IPR010255">
    <property type="entry name" value="Haem_peroxidase_sf"/>
</dbReference>
<dbReference type="InterPro" id="IPR019794">
    <property type="entry name" value="Peroxidases_AS"/>
</dbReference>
<dbReference type="NCBIfam" id="TIGR00198">
    <property type="entry name" value="cat_per_HPI"/>
    <property type="match status" value="1"/>
</dbReference>
<dbReference type="NCBIfam" id="NF011635">
    <property type="entry name" value="PRK15061.1"/>
    <property type="match status" value="1"/>
</dbReference>
<dbReference type="PANTHER" id="PTHR30555:SF0">
    <property type="entry name" value="CATALASE-PEROXIDASE"/>
    <property type="match status" value="1"/>
</dbReference>
<dbReference type="PANTHER" id="PTHR30555">
    <property type="entry name" value="HYDROPEROXIDASE I, BIFUNCTIONAL CATALASE-PEROXIDASE"/>
    <property type="match status" value="1"/>
</dbReference>
<dbReference type="Pfam" id="PF00141">
    <property type="entry name" value="peroxidase"/>
    <property type="match status" value="2"/>
</dbReference>
<dbReference type="PRINTS" id="PR00460">
    <property type="entry name" value="BPEROXIDASE"/>
</dbReference>
<dbReference type="PRINTS" id="PR00458">
    <property type="entry name" value="PEROXIDASE"/>
</dbReference>
<dbReference type="SUPFAM" id="SSF48113">
    <property type="entry name" value="Heme-dependent peroxidases"/>
    <property type="match status" value="2"/>
</dbReference>
<dbReference type="PROSITE" id="PS00436">
    <property type="entry name" value="PEROXIDASE_2"/>
    <property type="match status" value="1"/>
</dbReference>
<dbReference type="PROSITE" id="PS50873">
    <property type="entry name" value="PEROXIDASE_4"/>
    <property type="match status" value="1"/>
</dbReference>
<accession>A3M1S3</accession>
<reference key="1">
    <citation type="journal article" date="2007" name="Genes Dev.">
        <title>New insights into Acinetobacter baumannii pathogenesis revealed by high-density pyrosequencing and transposon mutagenesis.</title>
        <authorList>
            <person name="Smith M.G."/>
            <person name="Gianoulis T.A."/>
            <person name="Pukatzki S."/>
            <person name="Mekalanos J.J."/>
            <person name="Ornston L.N."/>
            <person name="Gerstein M."/>
            <person name="Snyder M."/>
        </authorList>
    </citation>
    <scope>NUCLEOTIDE SEQUENCE [LARGE SCALE GENOMIC DNA]</scope>
    <source>
        <strain>ATCC 17978 / DSM 105126 / CIP 53.77 / LMG 1025 / NCDC KC755 / 5377</strain>
    </source>
</reference>
<proteinExistence type="inferred from homology"/>
<gene>
    <name evidence="1" type="primary">katG</name>
    <name type="ordered locus">A1S_0412</name>
</gene>